<name>CPFC_LIMRD</name>
<evidence type="ECO:0000255" key="1">
    <source>
        <dbReference type="HAMAP-Rule" id="MF_00323"/>
    </source>
</evidence>
<protein>
    <recommendedName>
        <fullName evidence="1">Coproporphyrin III ferrochelatase</fullName>
        <ecNumber evidence="1">4.99.1.9</ecNumber>
    </recommendedName>
</protein>
<keyword id="KW-0963">Cytoplasm</keyword>
<keyword id="KW-0350">Heme biosynthesis</keyword>
<keyword id="KW-0408">Iron</keyword>
<keyword id="KW-0456">Lyase</keyword>
<keyword id="KW-0479">Metal-binding</keyword>
<keyword id="KW-0627">Porphyrin biosynthesis</keyword>
<keyword id="KW-1185">Reference proteome</keyword>
<proteinExistence type="inferred from homology"/>
<reference key="1">
    <citation type="journal article" date="2011" name="PLoS Genet.">
        <title>The evolution of host specialization in the vertebrate gut symbiont Lactobacillus reuteri.</title>
        <authorList>
            <person name="Frese S.A."/>
            <person name="Benson A.K."/>
            <person name="Tannock G.W."/>
            <person name="Loach D.M."/>
            <person name="Kim J."/>
            <person name="Zhang M."/>
            <person name="Oh P.L."/>
            <person name="Heng N.C."/>
            <person name="Patil P.B."/>
            <person name="Juge N."/>
            <person name="Mackenzie D.A."/>
            <person name="Pearson B.M."/>
            <person name="Lapidus A."/>
            <person name="Dalin E."/>
            <person name="Tice H."/>
            <person name="Goltsman E."/>
            <person name="Land M."/>
            <person name="Hauser L."/>
            <person name="Ivanova N."/>
            <person name="Kyrpides N.C."/>
            <person name="Walter J."/>
        </authorList>
    </citation>
    <scope>NUCLEOTIDE SEQUENCE [LARGE SCALE GENOMIC DNA]</scope>
    <source>
        <strain>DSM 20016</strain>
    </source>
</reference>
<accession>A5VLS3</accession>
<organism>
    <name type="scientific">Limosilactobacillus reuteri (strain DSM 20016)</name>
    <name type="common">Lactobacillus reuteri</name>
    <dbReference type="NCBI Taxonomy" id="557436"/>
    <lineage>
        <taxon>Bacteria</taxon>
        <taxon>Bacillati</taxon>
        <taxon>Bacillota</taxon>
        <taxon>Bacilli</taxon>
        <taxon>Lactobacillales</taxon>
        <taxon>Lactobacillaceae</taxon>
        <taxon>Limosilactobacillus</taxon>
    </lineage>
</organism>
<gene>
    <name evidence="1" type="primary">cpfC</name>
    <name type="ordered locus">Lreu_1554</name>
</gene>
<sequence>MKKNGLLLVNLGSPDTPTTPDVKRYLKEFLSDRNVIEMPPALWQPLLRGIILPTRSWRSATFYRNCWTKDGSPLIVYTERLVAKVQGLMPEWVVKMAMTYGKPKISDTITGMKKECQNITVLPLFPFFTKSTTQTVIDKVKDADPEAKIIDRFSAEEDYLDLLAKQIQTAWDRGKYDKLLISYHGIPTAMVNHGDPYRDETEAATAELIKRLDIPEKQIKMAYQSKFGPMPWLKPYLRNTLLNEAQLGHRDVLVVAPSFVADCLETLEEDQVQNYQVFRENGGNNLVMVPSLNDSPEFAQFITDLVQRKG</sequence>
<dbReference type="EC" id="4.99.1.9" evidence="1"/>
<dbReference type="EMBL" id="CP000705">
    <property type="protein sequence ID" value="ABQ83797.1"/>
    <property type="molecule type" value="Genomic_DNA"/>
</dbReference>
<dbReference type="RefSeq" id="WP_003668899.1">
    <property type="nucleotide sequence ID" value="NC_009513.1"/>
</dbReference>
<dbReference type="SMR" id="A5VLS3"/>
<dbReference type="STRING" id="557436.Lreu_1554"/>
<dbReference type="KEGG" id="lre:Lreu_1554"/>
<dbReference type="PATRIC" id="fig|557436.17.peg.1328"/>
<dbReference type="eggNOG" id="COG0276">
    <property type="taxonomic scope" value="Bacteria"/>
</dbReference>
<dbReference type="HOGENOM" id="CLU_018884_0_0_9"/>
<dbReference type="UniPathway" id="UPA00252"/>
<dbReference type="Proteomes" id="UP000001991">
    <property type="component" value="Chromosome"/>
</dbReference>
<dbReference type="GO" id="GO:0005737">
    <property type="term" value="C:cytoplasm"/>
    <property type="evidence" value="ECO:0007669"/>
    <property type="project" value="UniProtKB-SubCell"/>
</dbReference>
<dbReference type="GO" id="GO:0004325">
    <property type="term" value="F:ferrochelatase activity"/>
    <property type="evidence" value="ECO:0007669"/>
    <property type="project" value="UniProtKB-UniRule"/>
</dbReference>
<dbReference type="GO" id="GO:0046872">
    <property type="term" value="F:metal ion binding"/>
    <property type="evidence" value="ECO:0007669"/>
    <property type="project" value="UniProtKB-KW"/>
</dbReference>
<dbReference type="GO" id="GO:0006783">
    <property type="term" value="P:heme biosynthetic process"/>
    <property type="evidence" value="ECO:0007669"/>
    <property type="project" value="UniProtKB-UniRule"/>
</dbReference>
<dbReference type="CDD" id="cd00419">
    <property type="entry name" value="Ferrochelatase_C"/>
    <property type="match status" value="1"/>
</dbReference>
<dbReference type="CDD" id="cd03411">
    <property type="entry name" value="Ferrochelatase_N"/>
    <property type="match status" value="1"/>
</dbReference>
<dbReference type="Gene3D" id="3.40.50.1400">
    <property type="match status" value="2"/>
</dbReference>
<dbReference type="HAMAP" id="MF_00323">
    <property type="entry name" value="Ferrochelatase"/>
    <property type="match status" value="1"/>
</dbReference>
<dbReference type="InterPro" id="IPR001015">
    <property type="entry name" value="Ferrochelatase"/>
</dbReference>
<dbReference type="InterPro" id="IPR019772">
    <property type="entry name" value="Ferrochelatase_AS"/>
</dbReference>
<dbReference type="InterPro" id="IPR033644">
    <property type="entry name" value="Ferrochelatase_C"/>
</dbReference>
<dbReference type="InterPro" id="IPR033659">
    <property type="entry name" value="Ferrochelatase_N"/>
</dbReference>
<dbReference type="NCBIfam" id="TIGR00109">
    <property type="entry name" value="hemH"/>
    <property type="match status" value="1"/>
</dbReference>
<dbReference type="PANTHER" id="PTHR11108">
    <property type="entry name" value="FERROCHELATASE"/>
    <property type="match status" value="1"/>
</dbReference>
<dbReference type="PANTHER" id="PTHR11108:SF1">
    <property type="entry name" value="FERROCHELATASE, MITOCHONDRIAL"/>
    <property type="match status" value="1"/>
</dbReference>
<dbReference type="Pfam" id="PF00762">
    <property type="entry name" value="Ferrochelatase"/>
    <property type="match status" value="1"/>
</dbReference>
<dbReference type="SUPFAM" id="SSF53800">
    <property type="entry name" value="Chelatase"/>
    <property type="match status" value="1"/>
</dbReference>
<dbReference type="PROSITE" id="PS00534">
    <property type="entry name" value="FERROCHELATASE"/>
    <property type="match status" value="1"/>
</dbReference>
<feature type="chain" id="PRO_1000059483" description="Coproporphyrin III ferrochelatase">
    <location>
        <begin position="1"/>
        <end position="310"/>
    </location>
</feature>
<feature type="binding site" evidence="1">
    <location>
        <position position="184"/>
    </location>
    <ligand>
        <name>Fe(2+)</name>
        <dbReference type="ChEBI" id="CHEBI:29033"/>
    </ligand>
</feature>
<feature type="binding site" evidence="1">
    <location>
        <position position="265"/>
    </location>
    <ligand>
        <name>Fe(2+)</name>
        <dbReference type="ChEBI" id="CHEBI:29033"/>
    </ligand>
</feature>
<comment type="function">
    <text evidence="1">Involved in coproporphyrin-dependent heme b biosynthesis. Catalyzes the insertion of ferrous iron into coproporphyrin III to form Fe-coproporphyrin III.</text>
</comment>
<comment type="catalytic activity">
    <reaction evidence="1">
        <text>Fe-coproporphyrin III + 2 H(+) = coproporphyrin III + Fe(2+)</text>
        <dbReference type="Rhea" id="RHEA:49572"/>
        <dbReference type="ChEBI" id="CHEBI:15378"/>
        <dbReference type="ChEBI" id="CHEBI:29033"/>
        <dbReference type="ChEBI" id="CHEBI:68438"/>
        <dbReference type="ChEBI" id="CHEBI:131725"/>
        <dbReference type="EC" id="4.99.1.9"/>
    </reaction>
    <physiologicalReaction direction="right-to-left" evidence="1">
        <dbReference type="Rhea" id="RHEA:49574"/>
    </physiologicalReaction>
</comment>
<comment type="pathway">
    <text evidence="1">Porphyrin-containing compound metabolism; protoheme biosynthesis.</text>
</comment>
<comment type="subcellular location">
    <subcellularLocation>
        <location evidence="1">Cytoplasm</location>
    </subcellularLocation>
</comment>
<comment type="similarity">
    <text evidence="1">Belongs to the ferrochelatase family.</text>
</comment>